<reference key="1">
    <citation type="journal article" date="1994" name="Genes Dev.">
        <title>Drosophila TFIIA directs cooperative DNA binding with TBP and mediates transcriptional activation.</title>
        <authorList>
            <person name="Yokomori K."/>
            <person name="Zeidler M.P."/>
            <person name="Chen J.-L."/>
            <person name="Verrijzer C.P."/>
            <person name="Mlodzik M."/>
            <person name="Tjian R."/>
        </authorList>
    </citation>
    <scope>NUCLEOTIDE SEQUENCE [GENOMIC DNA]</scope>
    <scope>PROTEIN SEQUENCE OF 42-59</scope>
    <scope>FUNCTION</scope>
    <scope>SUBUNIT</scope>
    <source>
        <strain>Oregon-R</strain>
    </source>
</reference>
<reference key="2">
    <citation type="journal article" date="2000" name="Science">
        <title>The genome sequence of Drosophila melanogaster.</title>
        <authorList>
            <person name="Adams M.D."/>
            <person name="Celniker S.E."/>
            <person name="Holt R.A."/>
            <person name="Evans C.A."/>
            <person name="Gocayne J.D."/>
            <person name="Amanatides P.G."/>
            <person name="Scherer S.E."/>
            <person name="Li P.W."/>
            <person name="Hoskins R.A."/>
            <person name="Galle R.F."/>
            <person name="George R.A."/>
            <person name="Lewis S.E."/>
            <person name="Richards S."/>
            <person name="Ashburner M."/>
            <person name="Henderson S.N."/>
            <person name="Sutton G.G."/>
            <person name="Wortman J.R."/>
            <person name="Yandell M.D."/>
            <person name="Zhang Q."/>
            <person name="Chen L.X."/>
            <person name="Brandon R.C."/>
            <person name="Rogers Y.-H.C."/>
            <person name="Blazej R.G."/>
            <person name="Champe M."/>
            <person name="Pfeiffer B.D."/>
            <person name="Wan K.H."/>
            <person name="Doyle C."/>
            <person name="Baxter E.G."/>
            <person name="Helt G."/>
            <person name="Nelson C.R."/>
            <person name="Miklos G.L.G."/>
            <person name="Abril J.F."/>
            <person name="Agbayani A."/>
            <person name="An H.-J."/>
            <person name="Andrews-Pfannkoch C."/>
            <person name="Baldwin D."/>
            <person name="Ballew R.M."/>
            <person name="Basu A."/>
            <person name="Baxendale J."/>
            <person name="Bayraktaroglu L."/>
            <person name="Beasley E.M."/>
            <person name="Beeson K.Y."/>
            <person name="Benos P.V."/>
            <person name="Berman B.P."/>
            <person name="Bhandari D."/>
            <person name="Bolshakov S."/>
            <person name="Borkova D."/>
            <person name="Botchan M.R."/>
            <person name="Bouck J."/>
            <person name="Brokstein P."/>
            <person name="Brottier P."/>
            <person name="Burtis K.C."/>
            <person name="Busam D.A."/>
            <person name="Butler H."/>
            <person name="Cadieu E."/>
            <person name="Center A."/>
            <person name="Chandra I."/>
            <person name="Cherry J.M."/>
            <person name="Cawley S."/>
            <person name="Dahlke C."/>
            <person name="Davenport L.B."/>
            <person name="Davies P."/>
            <person name="de Pablos B."/>
            <person name="Delcher A."/>
            <person name="Deng Z."/>
            <person name="Mays A.D."/>
            <person name="Dew I."/>
            <person name="Dietz S.M."/>
            <person name="Dodson K."/>
            <person name="Doup L.E."/>
            <person name="Downes M."/>
            <person name="Dugan-Rocha S."/>
            <person name="Dunkov B.C."/>
            <person name="Dunn P."/>
            <person name="Durbin K.J."/>
            <person name="Evangelista C.C."/>
            <person name="Ferraz C."/>
            <person name="Ferriera S."/>
            <person name="Fleischmann W."/>
            <person name="Fosler C."/>
            <person name="Gabrielian A.E."/>
            <person name="Garg N.S."/>
            <person name="Gelbart W.M."/>
            <person name="Glasser K."/>
            <person name="Glodek A."/>
            <person name="Gong F."/>
            <person name="Gorrell J.H."/>
            <person name="Gu Z."/>
            <person name="Guan P."/>
            <person name="Harris M."/>
            <person name="Harris N.L."/>
            <person name="Harvey D.A."/>
            <person name="Heiman T.J."/>
            <person name="Hernandez J.R."/>
            <person name="Houck J."/>
            <person name="Hostin D."/>
            <person name="Houston K.A."/>
            <person name="Howland T.J."/>
            <person name="Wei M.-H."/>
            <person name="Ibegwam C."/>
            <person name="Jalali M."/>
            <person name="Kalush F."/>
            <person name="Karpen G.H."/>
            <person name="Ke Z."/>
            <person name="Kennison J.A."/>
            <person name="Ketchum K.A."/>
            <person name="Kimmel B.E."/>
            <person name="Kodira C.D."/>
            <person name="Kraft C.L."/>
            <person name="Kravitz S."/>
            <person name="Kulp D."/>
            <person name="Lai Z."/>
            <person name="Lasko P."/>
            <person name="Lei Y."/>
            <person name="Levitsky A.A."/>
            <person name="Li J.H."/>
            <person name="Li Z."/>
            <person name="Liang Y."/>
            <person name="Lin X."/>
            <person name="Liu X."/>
            <person name="Mattei B."/>
            <person name="McIntosh T.C."/>
            <person name="McLeod M.P."/>
            <person name="McPherson D."/>
            <person name="Merkulov G."/>
            <person name="Milshina N.V."/>
            <person name="Mobarry C."/>
            <person name="Morris J."/>
            <person name="Moshrefi A."/>
            <person name="Mount S.M."/>
            <person name="Moy M."/>
            <person name="Murphy B."/>
            <person name="Murphy L."/>
            <person name="Muzny D.M."/>
            <person name="Nelson D.L."/>
            <person name="Nelson D.R."/>
            <person name="Nelson K.A."/>
            <person name="Nixon K."/>
            <person name="Nusskern D.R."/>
            <person name="Pacleb J.M."/>
            <person name="Palazzolo M."/>
            <person name="Pittman G.S."/>
            <person name="Pan S."/>
            <person name="Pollard J."/>
            <person name="Puri V."/>
            <person name="Reese M.G."/>
            <person name="Reinert K."/>
            <person name="Remington K."/>
            <person name="Saunders R.D.C."/>
            <person name="Scheeler F."/>
            <person name="Shen H."/>
            <person name="Shue B.C."/>
            <person name="Siden-Kiamos I."/>
            <person name="Simpson M."/>
            <person name="Skupski M.P."/>
            <person name="Smith T.J."/>
            <person name="Spier E."/>
            <person name="Spradling A.C."/>
            <person name="Stapleton M."/>
            <person name="Strong R."/>
            <person name="Sun E."/>
            <person name="Svirskas R."/>
            <person name="Tector C."/>
            <person name="Turner R."/>
            <person name="Venter E."/>
            <person name="Wang A.H."/>
            <person name="Wang X."/>
            <person name="Wang Z.-Y."/>
            <person name="Wassarman D.A."/>
            <person name="Weinstock G.M."/>
            <person name="Weissenbach J."/>
            <person name="Williams S.M."/>
            <person name="Woodage T."/>
            <person name="Worley K.C."/>
            <person name="Wu D."/>
            <person name="Yang S."/>
            <person name="Yao Q.A."/>
            <person name="Ye J."/>
            <person name="Yeh R.-F."/>
            <person name="Zaveri J.S."/>
            <person name="Zhan M."/>
            <person name="Zhang G."/>
            <person name="Zhao Q."/>
            <person name="Zheng L."/>
            <person name="Zheng X.H."/>
            <person name="Zhong F.N."/>
            <person name="Zhong W."/>
            <person name="Zhou X."/>
            <person name="Zhu S.C."/>
            <person name="Zhu X."/>
            <person name="Smith H.O."/>
            <person name="Gibbs R.A."/>
            <person name="Myers E.W."/>
            <person name="Rubin G.M."/>
            <person name="Venter J.C."/>
        </authorList>
    </citation>
    <scope>NUCLEOTIDE SEQUENCE [LARGE SCALE GENOMIC DNA]</scope>
    <source>
        <strain>Berkeley</strain>
    </source>
</reference>
<reference key="3">
    <citation type="journal article" date="2002" name="Genome Biol.">
        <title>Annotation of the Drosophila melanogaster euchromatic genome: a systematic review.</title>
        <authorList>
            <person name="Misra S."/>
            <person name="Crosby M.A."/>
            <person name="Mungall C.J."/>
            <person name="Matthews B.B."/>
            <person name="Campbell K.S."/>
            <person name="Hradecky P."/>
            <person name="Huang Y."/>
            <person name="Kaminker J.S."/>
            <person name="Millburn G.H."/>
            <person name="Prochnik S.E."/>
            <person name="Smith C.D."/>
            <person name="Tupy J.L."/>
            <person name="Whitfield E.J."/>
            <person name="Bayraktaroglu L."/>
            <person name="Berman B.P."/>
            <person name="Bettencourt B.R."/>
            <person name="Celniker S.E."/>
            <person name="de Grey A.D.N.J."/>
            <person name="Drysdale R.A."/>
            <person name="Harris N.L."/>
            <person name="Richter J."/>
            <person name="Russo S."/>
            <person name="Schroeder A.J."/>
            <person name="Shu S.Q."/>
            <person name="Stapleton M."/>
            <person name="Yamada C."/>
            <person name="Ashburner M."/>
            <person name="Gelbart W.M."/>
            <person name="Rubin G.M."/>
            <person name="Lewis S.E."/>
        </authorList>
    </citation>
    <scope>GENOME REANNOTATION</scope>
    <source>
        <strain>Berkeley</strain>
    </source>
</reference>
<reference key="4">
    <citation type="journal article" date="2002" name="Genome Biol.">
        <title>A Drosophila full-length cDNA resource.</title>
        <authorList>
            <person name="Stapleton M."/>
            <person name="Carlson J.W."/>
            <person name="Brokstein P."/>
            <person name="Yu C."/>
            <person name="Champe M."/>
            <person name="George R.A."/>
            <person name="Guarin H."/>
            <person name="Kronmiller B."/>
            <person name="Pacleb J.M."/>
            <person name="Park S."/>
            <person name="Wan K.H."/>
            <person name="Rubin G.M."/>
            <person name="Celniker S.E."/>
        </authorList>
    </citation>
    <scope>NUCLEOTIDE SEQUENCE [LARGE SCALE MRNA]</scope>
    <source>
        <strain>Berkeley</strain>
        <tissue>Embryo</tissue>
    </source>
</reference>
<reference key="5">
    <citation type="submission" date="2008-09" db="EMBL/GenBank/DDBJ databases">
        <authorList>
            <person name="Carlson J.W."/>
            <person name="Booth B."/>
            <person name="Frise E."/>
            <person name="Park S."/>
            <person name="Wan K.H."/>
            <person name="Yu C."/>
            <person name="Celniker S.E."/>
        </authorList>
    </citation>
    <scope>NUCLEOTIDE SEQUENCE [LARGE SCALE MRNA]</scope>
    <source>
        <strain>Berkeley</strain>
    </source>
</reference>
<reference key="6">
    <citation type="journal article" date="2017" name="Nature">
        <title>A heterochromatin-dependent transcription machinery drives piRNA expression.</title>
        <authorList>
            <person name="Andersen P.R."/>
            <person name="Tirian L."/>
            <person name="Vunjak M."/>
            <person name="Brennecke J."/>
        </authorList>
    </citation>
    <scope>FUNCTION</scope>
    <scope>INTERACTION WITH CG12721</scope>
    <scope>DISRUPTION PHENOTYPE</scope>
</reference>
<organism>
    <name type="scientific">Drosophila melanogaster</name>
    <name type="common">Fruit fly</name>
    <dbReference type="NCBI Taxonomy" id="7227"/>
    <lineage>
        <taxon>Eukaryota</taxon>
        <taxon>Metazoa</taxon>
        <taxon>Ecdysozoa</taxon>
        <taxon>Arthropoda</taxon>
        <taxon>Hexapoda</taxon>
        <taxon>Insecta</taxon>
        <taxon>Pterygota</taxon>
        <taxon>Neoptera</taxon>
        <taxon>Endopterygota</taxon>
        <taxon>Diptera</taxon>
        <taxon>Brachycera</taxon>
        <taxon>Muscomorpha</taxon>
        <taxon>Ephydroidea</taxon>
        <taxon>Drosophilidae</taxon>
        <taxon>Drosophila</taxon>
        <taxon>Sophophora</taxon>
    </lineage>
</organism>
<accession>P52656</accession>
<accession>B5RIE5</accession>
<accession>Q8MYY8</accession>
<accession>Q9VCG7</accession>
<gene>
    <name type="primary">TfIIA-S</name>
    <name type="ORF">CG5163</name>
</gene>
<feature type="chain" id="PRO_0000194048" description="Transcription initiation factor IIA subunit 2">
    <location>
        <begin position="1"/>
        <end position="106"/>
    </location>
</feature>
<feature type="sequence conflict" description="In Ref. 4; AAM29483." evidence="3" ref="4">
    <original>F</original>
    <variation>L</variation>
    <location>
        <position position="40"/>
    </location>
</feature>
<comment type="function">
    <text evidence="1 2">TFIIA is a component of the transcription machinery of RNA polymerase II and plays an important role in transcriptional activation (PubMed:7958898). TFIIA in a complex with TBP mediates transcriptional activity (PubMed:7958898). Part of a rhi-dependent transcription machinery that enables the generation of piRNA precursors from heterochromatin while maintaining the suppression of transposon-encoded promoters and enhancers (PubMed:28847004). Forms a complex with Moonshiner/CG12721 and Trf2 which recruit transcriptional machinery to heterochromatin to initiate the bidirectional transcription of piRNA clusters, by interacting with the RDC (rhi, del and cuff) complex that binds to repressive H3K9me3 marks in the chromatin (PubMed:28847004). This mechanism allows transcription to occur in piRNA clusters despite the lack of proper promoter elements and in the presence of the repressive H3K9me3 mark (PubMed:28847004).</text>
</comment>
<comment type="subunit">
    <text evidence="1 2">TFIIA is a heterodimer of the large unprocessed subunit 1 and a small subunit gamma (PubMed:7958898). It was originally believed to be a heterotrimer of an alpha (p30), a beta (p20) and a gamma (p14) subunit (PubMed:7958898). Forms a complex with Moonshiner/CG12721 and Trf2 (PubMed:28847004).</text>
</comment>
<comment type="interaction">
    <interactant intactId="EBI-123680">
        <id>P52656</id>
    </interactant>
    <interactant intactId="EBI-132413">
        <id>P52654</id>
        <label>TfIIA-L</label>
    </interactant>
    <organismsDiffer>false</organismsDiffer>
    <experiments>4</experiments>
</comment>
<comment type="subcellular location">
    <subcellularLocation>
        <location>Nucleus</location>
    </subcellularLocation>
</comment>
<comment type="tissue specificity">
    <text>Ubiquitous.</text>
</comment>
<comment type="disruption phenotype">
    <text evidence="1">Females are sterile.</text>
</comment>
<comment type="similarity">
    <text evidence="3">Belongs to the TFIIA subunit 2 family.</text>
</comment>
<keyword id="KW-0903">Direct protein sequencing</keyword>
<keyword id="KW-0539">Nucleus</keyword>
<keyword id="KW-1185">Reference proteome</keyword>
<keyword id="KW-0804">Transcription</keyword>
<keyword id="KW-0805">Transcription regulation</keyword>
<protein>
    <recommendedName>
        <fullName>Transcription initiation factor IIA subunit 2</fullName>
    </recommendedName>
    <alternativeName>
        <fullName>General transcription factor IIA subunit 2</fullName>
    </alternativeName>
    <alternativeName>
        <fullName>TFIIA p14 subunit</fullName>
        <shortName>TFIIA-14</shortName>
    </alternativeName>
    <alternativeName>
        <fullName>Transcription initiation factor IIA gamma chain</fullName>
        <shortName>TFIIA-gamma</shortName>
    </alternativeName>
    <alternativeName>
        <fullName>dTFIIA-S</fullName>
    </alternativeName>
</protein>
<evidence type="ECO:0000269" key="1">
    <source>
    </source>
</evidence>
<evidence type="ECO:0000269" key="2">
    <source>
    </source>
</evidence>
<evidence type="ECO:0000305" key="3"/>
<proteinExistence type="evidence at protein level"/>
<dbReference type="EMBL" id="X83271">
    <property type="protein sequence ID" value="CAA58244.1"/>
    <property type="molecule type" value="Genomic_DNA"/>
</dbReference>
<dbReference type="EMBL" id="AE014297">
    <property type="protein sequence ID" value="AAF56199.1"/>
    <property type="molecule type" value="Genomic_DNA"/>
</dbReference>
<dbReference type="EMBL" id="AY113478">
    <property type="protein sequence ID" value="AAM29483.1"/>
    <property type="molecule type" value="mRNA"/>
</dbReference>
<dbReference type="EMBL" id="BT044069">
    <property type="protein sequence ID" value="ACH92134.1"/>
    <property type="molecule type" value="mRNA"/>
</dbReference>
<dbReference type="PIR" id="A54883">
    <property type="entry name" value="A55121"/>
</dbReference>
<dbReference type="RefSeq" id="NP_524467.1">
    <property type="nucleotide sequence ID" value="NM_079743.4"/>
</dbReference>
<dbReference type="SMR" id="P52656"/>
<dbReference type="BioGRID" id="67758">
    <property type="interactions" value="11"/>
</dbReference>
<dbReference type="ComplexPortal" id="CPX-2248">
    <property type="entry name" value="General transcription factor complex TFIIA, TfIIA-S variant"/>
</dbReference>
<dbReference type="DIP" id="DIP-23236N"/>
<dbReference type="FunCoup" id="P52656">
    <property type="interactions" value="1828"/>
</dbReference>
<dbReference type="IntAct" id="P52656">
    <property type="interactions" value="2"/>
</dbReference>
<dbReference type="STRING" id="7227.FBpp0083912"/>
<dbReference type="GlyGen" id="P52656">
    <property type="glycosylation" value="1 site"/>
</dbReference>
<dbReference type="PaxDb" id="7227-FBpp0083912"/>
<dbReference type="DNASU" id="42822"/>
<dbReference type="EnsemblMetazoa" id="FBtr0084526">
    <property type="protein sequence ID" value="FBpp0083912"/>
    <property type="gene ID" value="FBgn0013347"/>
</dbReference>
<dbReference type="GeneID" id="42822"/>
<dbReference type="KEGG" id="dme:Dmel_CG5163"/>
<dbReference type="UCSC" id="CG5163-RA">
    <property type="organism name" value="d. melanogaster"/>
</dbReference>
<dbReference type="AGR" id="FB:FBgn0013347"/>
<dbReference type="CTD" id="42822"/>
<dbReference type="FlyBase" id="FBgn0013347">
    <property type="gene designation" value="TfIIA-S"/>
</dbReference>
<dbReference type="VEuPathDB" id="VectorBase:FBgn0013347"/>
<dbReference type="eggNOG" id="KOG3463">
    <property type="taxonomic scope" value="Eukaryota"/>
</dbReference>
<dbReference type="GeneTree" id="ENSGT00390000014572"/>
<dbReference type="HOGENOM" id="CLU_112964_2_1_1"/>
<dbReference type="InParanoid" id="P52656"/>
<dbReference type="OMA" id="QYYELYR"/>
<dbReference type="OrthoDB" id="586585at2759"/>
<dbReference type="PhylomeDB" id="P52656"/>
<dbReference type="Reactome" id="R-DME-674695">
    <property type="pathway name" value="RNA Polymerase II Pre-transcription Events"/>
</dbReference>
<dbReference type="Reactome" id="R-DME-6807505">
    <property type="pathway name" value="RNA polymerase II transcribes snRNA genes"/>
</dbReference>
<dbReference type="Reactome" id="R-DME-73776">
    <property type="pathway name" value="RNA Polymerase II Promoter Escape"/>
</dbReference>
<dbReference type="Reactome" id="R-DME-73779">
    <property type="pathway name" value="RNA Polymerase II Transcription Pre-Initiation And Promoter Opening"/>
</dbReference>
<dbReference type="Reactome" id="R-DME-75953">
    <property type="pathway name" value="RNA Polymerase II Transcription Initiation"/>
</dbReference>
<dbReference type="Reactome" id="R-DME-76042">
    <property type="pathway name" value="RNA Polymerase II Transcription Initiation And Promoter Clearance"/>
</dbReference>
<dbReference type="Reactome" id="R-DME-9018519">
    <property type="pathway name" value="Estrogen-dependent gene expression"/>
</dbReference>
<dbReference type="SignaLink" id="P52656"/>
<dbReference type="BioGRID-ORCS" id="42822">
    <property type="hits" value="1 hit in 1 CRISPR screen"/>
</dbReference>
<dbReference type="GenomeRNAi" id="42822"/>
<dbReference type="PRO" id="PR:P52656"/>
<dbReference type="Proteomes" id="UP000000803">
    <property type="component" value="Chromosome 3R"/>
</dbReference>
<dbReference type="Bgee" id="FBgn0013347">
    <property type="expression patterns" value="Expressed in spermatogonium in testis and 205 other cell types or tissues"/>
</dbReference>
<dbReference type="ExpressionAtlas" id="P52656">
    <property type="expression patterns" value="baseline and differential"/>
</dbReference>
<dbReference type="GO" id="GO:0000792">
    <property type="term" value="C:heterochromatin"/>
    <property type="evidence" value="ECO:0000314"/>
    <property type="project" value="FlyBase"/>
</dbReference>
<dbReference type="GO" id="GO:0005634">
    <property type="term" value="C:nucleus"/>
    <property type="evidence" value="ECO:0000314"/>
    <property type="project" value="FlyBase"/>
</dbReference>
<dbReference type="GO" id="GO:0005672">
    <property type="term" value="C:transcription factor TFIIA complex"/>
    <property type="evidence" value="ECO:0000314"/>
    <property type="project" value="FlyBase"/>
</dbReference>
<dbReference type="GO" id="GO:0017025">
    <property type="term" value="F:TBP-class protein binding"/>
    <property type="evidence" value="ECO:0000353"/>
    <property type="project" value="FlyBase"/>
</dbReference>
<dbReference type="GO" id="GO:0051123">
    <property type="term" value="P:RNA polymerase II preinitiation complex assembly"/>
    <property type="evidence" value="ECO:0000318"/>
    <property type="project" value="GO_Central"/>
</dbReference>
<dbReference type="GO" id="GO:0006366">
    <property type="term" value="P:transcription by RNA polymerase II"/>
    <property type="evidence" value="ECO:0000314"/>
    <property type="project" value="FlyBase"/>
</dbReference>
<dbReference type="GO" id="GO:0006367">
    <property type="term" value="P:transcription initiation at RNA polymerase II promoter"/>
    <property type="evidence" value="ECO:0000250"/>
    <property type="project" value="FlyBase"/>
</dbReference>
<dbReference type="CDD" id="cd10014">
    <property type="entry name" value="TFIIA_gamma_C"/>
    <property type="match status" value="1"/>
</dbReference>
<dbReference type="CDD" id="cd10145">
    <property type="entry name" value="TFIIA_gamma_N"/>
    <property type="match status" value="1"/>
</dbReference>
<dbReference type="FunFam" id="1.10.287.190:FF:000001">
    <property type="entry name" value="Transcription initiation factor IIA subunit 2"/>
    <property type="match status" value="1"/>
</dbReference>
<dbReference type="FunFam" id="2.30.18.10:FF:000001">
    <property type="entry name" value="Transcription initiation factor IIA subunit 2"/>
    <property type="match status" value="1"/>
</dbReference>
<dbReference type="Gene3D" id="2.30.18.10">
    <property type="entry name" value="Transcription factor IIA (TFIIA), beta-barrel domain"/>
    <property type="match status" value="1"/>
</dbReference>
<dbReference type="Gene3D" id="1.10.287.190">
    <property type="entry name" value="Transcription factor IIA gamma subunit, alpha-helical domain"/>
    <property type="match status" value="1"/>
</dbReference>
<dbReference type="InterPro" id="IPR009083">
    <property type="entry name" value="TFIIA_a-hlx"/>
</dbReference>
<dbReference type="InterPro" id="IPR009088">
    <property type="entry name" value="TFIIA_b-brl"/>
</dbReference>
<dbReference type="InterPro" id="IPR003194">
    <property type="entry name" value="TFIIA_gsu"/>
</dbReference>
<dbReference type="InterPro" id="IPR015871">
    <property type="entry name" value="TFIIA_gsu_C"/>
</dbReference>
<dbReference type="InterPro" id="IPR015872">
    <property type="entry name" value="TFIIA_gsu_N"/>
</dbReference>
<dbReference type="PANTHER" id="PTHR10966">
    <property type="entry name" value="TRANSCRIPTION INITIATION FACTOR IIA SUBUNIT 2"/>
    <property type="match status" value="1"/>
</dbReference>
<dbReference type="Pfam" id="PF02751">
    <property type="entry name" value="TFIIA_gamma_C"/>
    <property type="match status" value="1"/>
</dbReference>
<dbReference type="Pfam" id="PF02268">
    <property type="entry name" value="TFIIA_gamma_N"/>
    <property type="match status" value="1"/>
</dbReference>
<dbReference type="PIRSF" id="PIRSF009415">
    <property type="entry name" value="Hum_TFIIA_gamma"/>
    <property type="match status" value="1"/>
</dbReference>
<dbReference type="SUPFAM" id="SSF47396">
    <property type="entry name" value="Transcription factor IIA (TFIIA), alpha-helical domain"/>
    <property type="match status" value="1"/>
</dbReference>
<dbReference type="SUPFAM" id="SSF50784">
    <property type="entry name" value="Transcription factor IIA (TFIIA), beta-barrel domain"/>
    <property type="match status" value="1"/>
</dbReference>
<sequence>MSYQLYRNTTLGNTLQESLDELIQYGQITPGLAFKVLLQFDKSINNALNQRVKARVTFKAGKLNTYRFCDNVWTLMLNDVEFREVHEIVKVDKVKIVACDGKSGEF</sequence>
<name>T2AG_DROME</name>